<evidence type="ECO:0000250" key="1">
    <source>
        <dbReference type="UniProtKB" id="A0A0B5ABD9"/>
    </source>
</evidence>
<evidence type="ECO:0000250" key="2">
    <source>
        <dbReference type="UniProtKB" id="A0A0B5AC95"/>
    </source>
</evidence>
<evidence type="ECO:0000255" key="3"/>
<evidence type="ECO:0000303" key="4">
    <source>
    </source>
</evidence>
<evidence type="ECO:0000305" key="5"/>
<evidence type="ECO:0000305" key="6">
    <source>
    </source>
</evidence>
<evidence type="ECO:0000312" key="7">
    <source>
        <dbReference type="EMBL" id="AJD85831.1"/>
    </source>
</evidence>
<sequence>MTTSSYFLLVALGLLLYLCQSSFGTEHTCEPGASPHPQGKCGPELAEFHETMCEVEESLQGGTDDARKKRGRASLLRKRRGFLSMLKARAKRNEASPLPRAGRGIVCECCKNSCTYEEITEYCPPVTEGSG</sequence>
<keyword id="KW-0027">Amidation</keyword>
<keyword id="KW-0119">Carbohydrate metabolism</keyword>
<keyword id="KW-0165">Cleavage on pair of basic residues</keyword>
<keyword id="KW-1015">Disulfide bond</keyword>
<keyword id="KW-0301">Gamma-carboxyglutamic acid</keyword>
<keyword id="KW-0313">Glucose metabolism</keyword>
<keyword id="KW-0372">Hormone</keyword>
<keyword id="KW-0964">Secreted</keyword>
<keyword id="KW-0732">Signal</keyword>
<keyword id="KW-0800">Toxin</keyword>
<dbReference type="EMBL" id="KP268608">
    <property type="protein sequence ID" value="AJD85831.1"/>
    <property type="molecule type" value="mRNA"/>
</dbReference>
<dbReference type="GO" id="GO:0005576">
    <property type="term" value="C:extracellular region"/>
    <property type="evidence" value="ECO:0007669"/>
    <property type="project" value="UniProtKB-SubCell"/>
</dbReference>
<dbReference type="GO" id="GO:0005179">
    <property type="term" value="F:hormone activity"/>
    <property type="evidence" value="ECO:0007669"/>
    <property type="project" value="UniProtKB-KW"/>
</dbReference>
<dbReference type="GO" id="GO:0090729">
    <property type="term" value="F:toxin activity"/>
    <property type="evidence" value="ECO:0007669"/>
    <property type="project" value="UniProtKB-KW"/>
</dbReference>
<dbReference type="GO" id="GO:0006006">
    <property type="term" value="P:glucose metabolic process"/>
    <property type="evidence" value="ECO:0007669"/>
    <property type="project" value="UniProtKB-KW"/>
</dbReference>
<dbReference type="CDD" id="cd04366">
    <property type="entry name" value="IlGF_insulin_bombyxin_like"/>
    <property type="match status" value="1"/>
</dbReference>
<dbReference type="Gene3D" id="1.10.100.10">
    <property type="entry name" value="Insulin-like"/>
    <property type="match status" value="1"/>
</dbReference>
<dbReference type="InterPro" id="IPR016179">
    <property type="entry name" value="Insulin-like"/>
</dbReference>
<dbReference type="InterPro" id="IPR036438">
    <property type="entry name" value="Insulin-like_sf"/>
</dbReference>
<dbReference type="InterPro" id="IPR016724">
    <property type="entry name" value="Insulin-rel_pep"/>
</dbReference>
<dbReference type="InterPro" id="IPR022353">
    <property type="entry name" value="Insulin_CS"/>
</dbReference>
<dbReference type="Pfam" id="PF00049">
    <property type="entry name" value="Insulin"/>
    <property type="match status" value="1"/>
</dbReference>
<dbReference type="PIRSF" id="PIRSF018431">
    <property type="entry name" value="Molluscan_insulin_rel_peptide"/>
    <property type="match status" value="1"/>
</dbReference>
<dbReference type="SMART" id="SM00078">
    <property type="entry name" value="IlGF"/>
    <property type="match status" value="1"/>
</dbReference>
<dbReference type="SUPFAM" id="SSF56994">
    <property type="entry name" value="Insulin-like"/>
    <property type="match status" value="1"/>
</dbReference>
<dbReference type="PROSITE" id="PS00262">
    <property type="entry name" value="INSULIN"/>
    <property type="match status" value="1"/>
</dbReference>
<name>INS1B_CONQU</name>
<feature type="signal peptide" evidence="3">
    <location>
        <begin position="1"/>
        <end position="24"/>
    </location>
</feature>
<feature type="peptide" id="PRO_5002098266" description="Con-Ins Q1b B chain" evidence="1">
    <location>
        <begin position="25"/>
        <end position="58"/>
    </location>
</feature>
<feature type="propeptide" id="PRO_0000439328" description="C peptide" evidence="1">
    <location>
        <begin position="59"/>
        <end position="92"/>
    </location>
</feature>
<feature type="peptide" id="PRO_0000439329" description="Con-Ins Q1b A chain" evidence="1">
    <location>
        <begin position="93"/>
        <end position="130"/>
    </location>
</feature>
<feature type="modified residue" description="4-carboxyglutamate; partial" evidence="2">
    <location>
        <position position="118"/>
    </location>
</feature>
<feature type="modified residue" description="Serine amide" evidence="6">
    <location>
        <position position="130"/>
    </location>
</feature>
<feature type="disulfide bond" evidence="5">
    <location>
        <begin position="29"/>
        <end position="107"/>
    </location>
</feature>
<feature type="disulfide bond" description="Interchain (between B and A chains)" evidence="2">
    <location>
        <begin position="41"/>
        <end position="110"/>
    </location>
</feature>
<feature type="disulfide bond" description="Interchain (between B and A chains)" evidence="2">
    <location>
        <begin position="53"/>
        <end position="123"/>
    </location>
</feature>
<feature type="disulfide bond" evidence="2">
    <location>
        <begin position="109"/>
        <end position="114"/>
    </location>
</feature>
<proteinExistence type="evidence at protein level"/>
<accession>A0A0B5ABE4</accession>
<organism>
    <name type="scientific">Conus quercinus</name>
    <name type="common">Oak cone</name>
    <dbReference type="NCBI Taxonomy" id="101313"/>
    <lineage>
        <taxon>Eukaryota</taxon>
        <taxon>Metazoa</taxon>
        <taxon>Spiralia</taxon>
        <taxon>Lophotrochozoa</taxon>
        <taxon>Mollusca</taxon>
        <taxon>Gastropoda</taxon>
        <taxon>Caenogastropoda</taxon>
        <taxon>Neogastropoda</taxon>
        <taxon>Conoidea</taxon>
        <taxon>Conidae</taxon>
        <taxon>Conus</taxon>
        <taxon>Lividoconus</taxon>
    </lineage>
</organism>
<reference key="1">
    <citation type="journal article" date="2015" name="Proc. Natl. Acad. Sci. U.S.A.">
        <title>Specialized insulin is used for chemical warfare by fish-hunting cone snails.</title>
        <authorList>
            <person name="Safavi-Hemami H."/>
            <person name="Gajewiak J."/>
            <person name="Karanth S."/>
            <person name="Robinson S.D."/>
            <person name="Ueberheide B."/>
            <person name="Douglass A.D."/>
            <person name="Schlegel A."/>
            <person name="Imperial J.S."/>
            <person name="Watkins M."/>
            <person name="Bandyopadhyay P.K."/>
            <person name="Yandell M."/>
            <person name="Li Q."/>
            <person name="Purcell A.W."/>
            <person name="Norton R.S."/>
            <person name="Ellgaard L."/>
            <person name="Olivera B.M."/>
        </authorList>
    </citation>
    <scope>NUCLEOTIDE SEQUENCE [MRNA]</scope>
    <scope>AMIDATION AT SER-130</scope>
    <source>
        <tissue>Venom gland</tissue>
    </source>
</reference>
<comment type="function">
    <text evidence="2">This venom insulin facilitates prey capture by rapidly inducing hypoglycemic shock. Intraperitoneal injection of this peptide into zebrafish lowers blood glucose with the same potency than human insulin. In vivo, when applied to water, this peptide reduces overall locomotor activity of zebrafish larvae, observed as a significant decrease in the percentage of time spent swimming and movement frequency.</text>
</comment>
<comment type="subunit">
    <text evidence="2">Heterodimer of A and B chains; disulfide-linked.</text>
</comment>
<comment type="subcellular location">
    <subcellularLocation>
        <location evidence="2">Secreted</location>
    </subcellularLocation>
</comment>
<comment type="tissue specificity">
    <text evidence="6">Expressed by the venom gland.</text>
</comment>
<comment type="similarity">
    <text>Belongs to the insulin family.</text>
</comment>
<protein>
    <recommendedName>
        <fullName evidence="4">Con-Ins Q1b</fullName>
    </recommendedName>
    <alternativeName>
        <fullName evidence="7">Insulin 1b</fullName>
    </alternativeName>
    <component>
        <recommendedName>
            <fullName evidence="4">Con-Ins Q1b B chain</fullName>
        </recommendedName>
    </component>
    <component>
        <recommendedName>
            <fullName evidence="4">Con-Ins Q1b A chain</fullName>
        </recommendedName>
    </component>
</protein>